<comment type="catalytic activity">
    <reaction>
        <text>Hydrolysis of terminal, non-reducing beta-D-glucosyl residues with release of beta-D-glucose.</text>
        <dbReference type="EC" id="3.2.1.21"/>
    </reaction>
</comment>
<comment type="pathway">
    <text>Glycan metabolism; cellulose degradation.</text>
</comment>
<comment type="similarity">
    <text evidence="3">Belongs to the glycosyl hydrolase 3 family.</text>
</comment>
<keyword id="KW-0002">3D-structure</keyword>
<keyword id="KW-0119">Carbohydrate metabolism</keyword>
<keyword id="KW-0136">Cellulose degradation</keyword>
<keyword id="KW-0325">Glycoprotein</keyword>
<keyword id="KW-0326">Glycosidase</keyword>
<keyword id="KW-0378">Hydrolase</keyword>
<keyword id="KW-0624">Polysaccharide degradation</keyword>
<keyword id="KW-0732">Signal</keyword>
<reference key="1">
    <citation type="journal article" date="1996" name="Gene">
        <title>Cloning and sequencing of the cDNA encoding beta-glucosidase 1 from Aspergillus aculeatus.</title>
        <authorList>
            <person name="Kawaguchi T."/>
            <person name="Enoki T."/>
            <person name="Tsurumaki S."/>
            <person name="Sumitani J."/>
            <person name="Ueda M."/>
            <person name="Ooi T."/>
            <person name="Arai M."/>
        </authorList>
    </citation>
    <scope>NUCLEOTIDE SEQUENCE [MRNA]</scope>
    <source>
        <strain>F-50</strain>
    </source>
</reference>
<name>BGL1_ASPAC</name>
<evidence type="ECO:0000250" key="1"/>
<evidence type="ECO:0000255" key="2"/>
<evidence type="ECO:0000305" key="3"/>
<evidence type="ECO:0007829" key="4">
    <source>
        <dbReference type="PDB" id="4IIB"/>
    </source>
</evidence>
<dbReference type="EC" id="3.2.1.21"/>
<dbReference type="EMBL" id="D64088">
    <property type="protein sequence ID" value="BAA10968.1"/>
    <property type="molecule type" value="mRNA"/>
</dbReference>
<dbReference type="PIR" id="JC4939">
    <property type="entry name" value="JC4939"/>
</dbReference>
<dbReference type="PDB" id="4IIB">
    <property type="method" value="X-ray"/>
    <property type="resolution" value="1.80 A"/>
    <property type="chains" value="A/B=20-860"/>
</dbReference>
<dbReference type="PDB" id="4IIC">
    <property type="method" value="X-ray"/>
    <property type="resolution" value="1.90 A"/>
    <property type="chains" value="A/B=20-860"/>
</dbReference>
<dbReference type="PDB" id="4IID">
    <property type="method" value="X-ray"/>
    <property type="resolution" value="2.30 A"/>
    <property type="chains" value="A/B=20-860"/>
</dbReference>
<dbReference type="PDB" id="4IIE">
    <property type="method" value="X-ray"/>
    <property type="resolution" value="2.00 A"/>
    <property type="chains" value="A/B=20-860"/>
</dbReference>
<dbReference type="PDB" id="4IIF">
    <property type="method" value="X-ray"/>
    <property type="resolution" value="2.45 A"/>
    <property type="chains" value="A/B=20-860"/>
</dbReference>
<dbReference type="PDB" id="4IIG">
    <property type="method" value="X-ray"/>
    <property type="resolution" value="2.30 A"/>
    <property type="chains" value="A/B=20-860"/>
</dbReference>
<dbReference type="PDB" id="4IIH">
    <property type="method" value="X-ray"/>
    <property type="resolution" value="2.00 A"/>
    <property type="chains" value="A/B=20-860"/>
</dbReference>
<dbReference type="PDBsum" id="4IIB"/>
<dbReference type="PDBsum" id="4IIC"/>
<dbReference type="PDBsum" id="4IID"/>
<dbReference type="PDBsum" id="4IIE"/>
<dbReference type="PDBsum" id="4IIF"/>
<dbReference type="PDBsum" id="4IIG"/>
<dbReference type="PDBsum" id="4IIH"/>
<dbReference type="SMR" id="P48825"/>
<dbReference type="BindingDB" id="P48825"/>
<dbReference type="ChEMBL" id="CHEMBL3493"/>
<dbReference type="CAZy" id="GH3">
    <property type="family name" value="Glycoside Hydrolase Family 3"/>
</dbReference>
<dbReference type="VEuPathDB" id="FungiDB:ASPACDRAFT_50312"/>
<dbReference type="BRENDA" id="3.2.1.21">
    <property type="organism ID" value="488"/>
</dbReference>
<dbReference type="UniPathway" id="UPA00696"/>
<dbReference type="EvolutionaryTrace" id="P48825"/>
<dbReference type="GO" id="GO:0008422">
    <property type="term" value="F:beta-glucosidase activity"/>
    <property type="evidence" value="ECO:0007669"/>
    <property type="project" value="UniProtKB-EC"/>
</dbReference>
<dbReference type="GO" id="GO:0030245">
    <property type="term" value="P:cellulose catabolic process"/>
    <property type="evidence" value="ECO:0007669"/>
    <property type="project" value="UniProtKB-UniPathway"/>
</dbReference>
<dbReference type="FunFam" id="2.60.40.10:FF:001391">
    <property type="entry name" value="Beta-glucosidase"/>
    <property type="match status" value="1"/>
</dbReference>
<dbReference type="FunFam" id="3.20.20.300:FF:000002">
    <property type="entry name" value="Probable beta-glucosidase"/>
    <property type="match status" value="1"/>
</dbReference>
<dbReference type="FunFam" id="3.40.50.1700:FF:000003">
    <property type="entry name" value="Probable beta-glucosidase"/>
    <property type="match status" value="1"/>
</dbReference>
<dbReference type="Gene3D" id="3.40.50.1700">
    <property type="entry name" value="Glycoside hydrolase family 3 C-terminal domain"/>
    <property type="match status" value="1"/>
</dbReference>
<dbReference type="Gene3D" id="3.20.20.300">
    <property type="entry name" value="Glycoside hydrolase, family 3, N-terminal domain"/>
    <property type="match status" value="1"/>
</dbReference>
<dbReference type="Gene3D" id="2.60.40.10">
    <property type="entry name" value="Immunoglobulins"/>
    <property type="match status" value="1"/>
</dbReference>
<dbReference type="InterPro" id="IPR050288">
    <property type="entry name" value="Cellulose_deg_GH3"/>
</dbReference>
<dbReference type="InterPro" id="IPR026891">
    <property type="entry name" value="Fn3-like"/>
</dbReference>
<dbReference type="InterPro" id="IPR019800">
    <property type="entry name" value="Glyco_hydro_3_AS"/>
</dbReference>
<dbReference type="InterPro" id="IPR002772">
    <property type="entry name" value="Glyco_hydro_3_C"/>
</dbReference>
<dbReference type="InterPro" id="IPR036881">
    <property type="entry name" value="Glyco_hydro_3_C_sf"/>
</dbReference>
<dbReference type="InterPro" id="IPR001764">
    <property type="entry name" value="Glyco_hydro_3_N"/>
</dbReference>
<dbReference type="InterPro" id="IPR036962">
    <property type="entry name" value="Glyco_hydro_3_N_sf"/>
</dbReference>
<dbReference type="InterPro" id="IPR017853">
    <property type="entry name" value="Glycoside_hydrolase_SF"/>
</dbReference>
<dbReference type="InterPro" id="IPR013783">
    <property type="entry name" value="Ig-like_fold"/>
</dbReference>
<dbReference type="PANTHER" id="PTHR42715">
    <property type="entry name" value="BETA-GLUCOSIDASE"/>
    <property type="match status" value="1"/>
</dbReference>
<dbReference type="PANTHER" id="PTHR42715:SF29">
    <property type="entry name" value="BETA-GLUCOSIDASE A-RELATED"/>
    <property type="match status" value="1"/>
</dbReference>
<dbReference type="Pfam" id="PF14310">
    <property type="entry name" value="Fn3-like"/>
    <property type="match status" value="1"/>
</dbReference>
<dbReference type="Pfam" id="PF00933">
    <property type="entry name" value="Glyco_hydro_3"/>
    <property type="match status" value="1"/>
</dbReference>
<dbReference type="Pfam" id="PF01915">
    <property type="entry name" value="Glyco_hydro_3_C"/>
    <property type="match status" value="1"/>
</dbReference>
<dbReference type="PRINTS" id="PR00133">
    <property type="entry name" value="GLHYDRLASE3"/>
</dbReference>
<dbReference type="SMART" id="SM01217">
    <property type="entry name" value="Fn3_like"/>
    <property type="match status" value="1"/>
</dbReference>
<dbReference type="SUPFAM" id="SSF51445">
    <property type="entry name" value="(Trans)glycosidases"/>
    <property type="match status" value="1"/>
</dbReference>
<dbReference type="SUPFAM" id="SSF52279">
    <property type="entry name" value="Beta-D-glucan exohydrolase, C-terminal domain"/>
    <property type="match status" value="1"/>
</dbReference>
<dbReference type="PROSITE" id="PS00775">
    <property type="entry name" value="GLYCOSYL_HYDROL_F3"/>
    <property type="match status" value="1"/>
</dbReference>
<organism>
    <name type="scientific">Aspergillus aculeatus</name>
    <dbReference type="NCBI Taxonomy" id="5053"/>
    <lineage>
        <taxon>Eukaryota</taxon>
        <taxon>Fungi</taxon>
        <taxon>Dikarya</taxon>
        <taxon>Ascomycota</taxon>
        <taxon>Pezizomycotina</taxon>
        <taxon>Eurotiomycetes</taxon>
        <taxon>Eurotiomycetidae</taxon>
        <taxon>Eurotiales</taxon>
        <taxon>Aspergillaceae</taxon>
        <taxon>Aspergillus</taxon>
        <taxon>Aspergillus subgen. Circumdati</taxon>
    </lineage>
</organism>
<protein>
    <recommendedName>
        <fullName>Beta-glucosidase 1</fullName>
        <ecNumber>3.2.1.21</ecNumber>
    </recommendedName>
    <alternativeName>
        <fullName>Beta-D-glucoside glucohydrolase</fullName>
    </alternativeName>
    <alternativeName>
        <fullName>Cellobiase</fullName>
    </alternativeName>
    <alternativeName>
        <fullName>Gentiobiase</fullName>
    </alternativeName>
</protein>
<sequence>MKLSWLEAAALTAASVVSADELAFSPPFYPSPWANGQGEWAEAYQRAVAIVSQMTLDEKVNLTTGTGWELEKCVGQTGGVPRLNIGGMCLQDSPLGIRDSDYNSAFPAGVNVAATWDKNLAYLRGQAMGQEFSDKGIDVQLGPAAGPLGRSPDGGRNWEGFSPDPALTGVLFAETIKGIQDAGVVATAKHYILNEQEHFRQVAEAAGYGFNISDTISSNVDDKTIHEMYLWPFADAVRAGVGAIMCSYNQINNSYGCQNSYTLNKLLKAELGFQGFVMSDWGAHHSGVGSALAGLDMSMPGDITFDSATSFWGTNLTIAVLNGTVPQWRVDDMAVRIMAAYYKVGRDRLYQPPNFSSWTRDEYGFKYFYPQEGPYEKVNHFVNVQRNHSEVIRKLGADSTVLLKNNNALPLTGKERKVAILGEDAGSNSYGANGCSDRGCDNGTLAMAWGSGTAEFPYLVTPEQAIQAEVLKHKGSVYAITDNWALSQVETLAKQASVSLVFVNSDAGEGYISVDGNEGDRNNLTLWKNGDNLIKAAANNCNNTIVVIHSVGPVLVDEWYDHPNVTAILWAGLPGQESGNSLADVLYGRVNPGAKSPFTWGKTREAYGDYLVRELNNGNGAPQDDFSEGVFIDYRGFDKRNETPIYEFGHGLSYTTFNYSGLHIQVLNASSNAQVATETGAAPTFGQVGNASDYVYPEGLTRISKFIYPWLNSTDLKASSGDPYYGVDTAEHVPEGATDGSPQPVLPAGGGSGGNPRLYDELIRVSVTVKNTGRVAGDAVPQLYVSLGGPNEPKVVLRKFDRLTLKPSEETVWTTTLTRRDLSNWDVAAQDWVITSYPKKVHVGSSSRQLPLHAALPKVQ</sequence>
<feature type="signal peptide" evidence="2">
    <location>
        <begin position="1"/>
        <end position="19"/>
    </location>
</feature>
<feature type="chain" id="PRO_0000011776" description="Beta-glucosidase 1">
    <location>
        <begin position="20"/>
        <end position="860"/>
    </location>
</feature>
<feature type="active site" evidence="1">
    <location>
        <position position="280"/>
    </location>
</feature>
<feature type="glycosylation site" description="N-linked (GlcNAc...) asparagine" evidence="2">
    <location>
        <position position="61"/>
    </location>
</feature>
<feature type="glycosylation site" description="N-linked (GlcNAc...) asparagine" evidence="2">
    <location>
        <position position="211"/>
    </location>
</feature>
<feature type="glycosylation site" description="N-linked (GlcNAc...) asparagine" evidence="2">
    <location>
        <position position="252"/>
    </location>
</feature>
<feature type="glycosylation site" description="N-linked (GlcNAc...) asparagine" evidence="2">
    <location>
        <position position="315"/>
    </location>
</feature>
<feature type="glycosylation site" description="N-linked (GlcNAc...) asparagine" evidence="2">
    <location>
        <position position="322"/>
    </location>
</feature>
<feature type="glycosylation site" description="N-linked (GlcNAc...) asparagine" evidence="2">
    <location>
        <position position="354"/>
    </location>
</feature>
<feature type="glycosylation site" description="N-linked (GlcNAc...) asparagine" evidence="2">
    <location>
        <position position="387"/>
    </location>
</feature>
<feature type="glycosylation site" description="N-linked (GlcNAc...) asparagine" evidence="2">
    <location>
        <position position="442"/>
    </location>
</feature>
<feature type="glycosylation site" description="N-linked (GlcNAc...) asparagine" evidence="2">
    <location>
        <position position="523"/>
    </location>
</feature>
<feature type="glycosylation site" description="N-linked (GlcNAc...) asparagine" evidence="2">
    <location>
        <position position="542"/>
    </location>
</feature>
<feature type="glycosylation site" description="N-linked (GlcNAc...) asparagine" evidence="2">
    <location>
        <position position="564"/>
    </location>
</feature>
<feature type="glycosylation site" description="N-linked (GlcNAc...) asparagine" evidence="2">
    <location>
        <position position="658"/>
    </location>
</feature>
<feature type="glycosylation site" description="N-linked (GlcNAc...) asparagine" evidence="2">
    <location>
        <position position="668"/>
    </location>
</feature>
<feature type="glycosylation site" description="N-linked (GlcNAc...) asparagine" evidence="2">
    <location>
        <position position="690"/>
    </location>
</feature>
<feature type="glycosylation site" description="N-linked (GlcNAc...) asparagine" evidence="2">
    <location>
        <position position="712"/>
    </location>
</feature>
<feature type="helix" evidence="4">
    <location>
        <begin position="38"/>
        <end position="40"/>
    </location>
</feature>
<feature type="helix" evidence="4">
    <location>
        <begin position="41"/>
        <end position="51"/>
    </location>
</feature>
<feature type="helix" evidence="4">
    <location>
        <begin position="56"/>
        <end position="63"/>
    </location>
</feature>
<feature type="strand" evidence="4">
    <location>
        <begin position="70"/>
        <end position="77"/>
    </location>
</feature>
<feature type="helix" evidence="4">
    <location>
        <begin position="81"/>
        <end position="83"/>
    </location>
</feature>
<feature type="strand" evidence="4">
    <location>
        <begin position="89"/>
        <end position="91"/>
    </location>
</feature>
<feature type="helix" evidence="4">
    <location>
        <begin position="109"/>
        <end position="115"/>
    </location>
</feature>
<feature type="helix" evidence="4">
    <location>
        <begin position="118"/>
        <end position="134"/>
    </location>
</feature>
<feature type="strand" evidence="4">
    <location>
        <begin position="138"/>
        <end position="140"/>
    </location>
</feature>
<feature type="helix" evidence="4">
    <location>
        <begin position="157"/>
        <end position="159"/>
    </location>
</feature>
<feature type="helix" evidence="4">
    <location>
        <begin position="165"/>
        <end position="181"/>
    </location>
</feature>
<feature type="strand" evidence="4">
    <location>
        <begin position="185"/>
        <end position="192"/>
    </location>
</feature>
<feature type="helix" evidence="4">
    <location>
        <begin position="202"/>
        <end position="207"/>
    </location>
</feature>
<feature type="strand" evidence="4">
    <location>
        <begin position="217"/>
        <end position="219"/>
    </location>
</feature>
<feature type="helix" evidence="4">
    <location>
        <begin position="222"/>
        <end position="227"/>
    </location>
</feature>
<feature type="turn" evidence="4">
    <location>
        <begin position="228"/>
        <end position="230"/>
    </location>
</feature>
<feature type="helix" evidence="4">
    <location>
        <begin position="231"/>
        <end position="238"/>
    </location>
</feature>
<feature type="strand" evidence="4">
    <location>
        <begin position="243"/>
        <end position="246"/>
    </location>
</feature>
<feature type="strand" evidence="4">
    <location>
        <begin position="248"/>
        <end position="251"/>
    </location>
</feature>
<feature type="helix" evidence="4">
    <location>
        <begin position="256"/>
        <end position="258"/>
    </location>
</feature>
<feature type="helix" evidence="4">
    <location>
        <begin position="260"/>
        <end position="263"/>
    </location>
</feature>
<feature type="helix" evidence="4">
    <location>
        <begin position="264"/>
        <end position="270"/>
    </location>
</feature>
<feature type="strand" evidence="4">
    <location>
        <begin position="275"/>
        <end position="279"/>
    </location>
</feature>
<feature type="helix" evidence="4">
    <location>
        <begin position="288"/>
        <end position="293"/>
    </location>
</feature>
<feature type="strand" evidence="4">
    <location>
        <begin position="297"/>
        <end position="304"/>
    </location>
</feature>
<feature type="helix" evidence="4">
    <location>
        <begin position="314"/>
        <end position="321"/>
    </location>
</feature>
<feature type="helix" evidence="4">
    <location>
        <begin position="327"/>
        <end position="343"/>
    </location>
</feature>
<feature type="helix" evidence="4">
    <location>
        <begin position="346"/>
        <end position="348"/>
    </location>
</feature>
<feature type="strand" evidence="4">
    <location>
        <begin position="362"/>
        <end position="367"/>
    </location>
</feature>
<feature type="turn" evidence="4">
    <location>
        <begin position="368"/>
        <end position="371"/>
    </location>
</feature>
<feature type="strand" evidence="4">
    <location>
        <begin position="372"/>
        <end position="377"/>
    </location>
</feature>
<feature type="turn" evidence="4">
    <location>
        <begin position="386"/>
        <end position="388"/>
    </location>
</feature>
<feature type="helix" evidence="4">
    <location>
        <begin position="389"/>
        <end position="398"/>
    </location>
</feature>
<feature type="strand" evidence="4">
    <location>
        <begin position="401"/>
        <end position="407"/>
    </location>
</feature>
<feature type="strand" evidence="4">
    <location>
        <begin position="416"/>
        <end position="422"/>
    </location>
</feature>
<feature type="helix" evidence="4">
    <location>
        <begin position="423"/>
        <end position="425"/>
    </location>
</feature>
<feature type="helix" evidence="4">
    <location>
        <begin position="436"/>
        <end position="438"/>
    </location>
</feature>
<feature type="strand" evidence="4">
    <location>
        <begin position="449"/>
        <end position="452"/>
    </location>
</feature>
<feature type="helix" evidence="4">
    <location>
        <begin position="462"/>
        <end position="472"/>
    </location>
</feature>
<feature type="strand" evidence="4">
    <location>
        <begin position="476"/>
        <end position="480"/>
    </location>
</feature>
<feature type="helix" evidence="4">
    <location>
        <begin position="486"/>
        <end position="495"/>
    </location>
</feature>
<feature type="strand" evidence="4">
    <location>
        <begin position="497"/>
        <end position="505"/>
    </location>
</feature>
<feature type="strand" evidence="4">
    <location>
        <begin position="517"/>
        <end position="520"/>
    </location>
</feature>
<feature type="helix" evidence="4">
    <location>
        <begin position="530"/>
        <end position="540"/>
    </location>
</feature>
<feature type="strand" evidence="4">
    <location>
        <begin position="542"/>
        <end position="552"/>
    </location>
</feature>
<feature type="turn" evidence="4">
    <location>
        <begin position="557"/>
        <end position="561"/>
    </location>
</feature>
<feature type="strand" evidence="4">
    <location>
        <begin position="565"/>
        <end position="570"/>
    </location>
</feature>
<feature type="helix" evidence="4">
    <location>
        <begin position="575"/>
        <end position="577"/>
    </location>
</feature>
<feature type="helix" evidence="4">
    <location>
        <begin position="578"/>
        <end position="586"/>
    </location>
</feature>
<feature type="strand" evidence="4">
    <location>
        <begin position="602"/>
        <end position="604"/>
    </location>
</feature>
<feature type="helix" evidence="4">
    <location>
        <begin position="605"/>
        <end position="607"/>
    </location>
</feature>
<feature type="strand" evidence="4">
    <location>
        <begin position="623"/>
        <end position="625"/>
    </location>
</feature>
<feature type="turn" evidence="4">
    <location>
        <begin position="627"/>
        <end position="630"/>
    </location>
</feature>
<feature type="helix" evidence="4">
    <location>
        <begin position="634"/>
        <end position="639"/>
    </location>
</feature>
<feature type="strand" evidence="4">
    <location>
        <begin position="657"/>
        <end position="666"/>
    </location>
</feature>
<feature type="helix" evidence="4">
    <location>
        <begin position="691"/>
        <end position="694"/>
    </location>
</feature>
<feature type="strand" evidence="4">
    <location>
        <begin position="711"/>
        <end position="714"/>
    </location>
</feature>
<feature type="helix" evidence="4">
    <location>
        <begin position="716"/>
        <end position="720"/>
    </location>
</feature>
<feature type="turn" evidence="4">
    <location>
        <begin position="723"/>
        <end position="726"/>
    </location>
</feature>
<feature type="helix" evidence="4">
    <location>
        <begin position="729"/>
        <end position="732"/>
    </location>
</feature>
<feature type="turn" evidence="4">
    <location>
        <begin position="735"/>
        <end position="738"/>
    </location>
</feature>
<feature type="strand" evidence="4">
    <location>
        <begin position="750"/>
        <end position="754"/>
    </location>
</feature>
<feature type="helix" evidence="4">
    <location>
        <begin position="756"/>
        <end position="759"/>
    </location>
</feature>
<feature type="strand" evidence="4">
    <location>
        <begin position="761"/>
        <end position="771"/>
    </location>
</feature>
<feature type="strand" evidence="4">
    <location>
        <begin position="773"/>
        <end position="775"/>
    </location>
</feature>
<feature type="strand" evidence="4">
    <location>
        <begin position="777"/>
        <end position="779"/>
    </location>
</feature>
<feature type="strand" evidence="4">
    <location>
        <begin position="782"/>
        <end position="786"/>
    </location>
</feature>
<feature type="strand" evidence="4">
    <location>
        <begin position="796"/>
        <end position="800"/>
    </location>
</feature>
<feature type="strand" evidence="4">
    <location>
        <begin position="803"/>
        <end position="805"/>
    </location>
</feature>
<feature type="strand" evidence="4">
    <location>
        <begin position="810"/>
        <end position="818"/>
    </location>
</feature>
<feature type="helix" evidence="4">
    <location>
        <begin position="819"/>
        <end position="822"/>
    </location>
</feature>
<feature type="strand" evidence="4">
    <location>
        <begin position="824"/>
        <end position="826"/>
    </location>
</feature>
<feature type="turn" evidence="4">
    <location>
        <begin position="827"/>
        <end position="830"/>
    </location>
</feature>
<feature type="strand" evidence="4">
    <location>
        <begin position="831"/>
        <end position="833"/>
    </location>
</feature>
<feature type="strand" evidence="4">
    <location>
        <begin position="840"/>
        <end position="846"/>
    </location>
</feature>
<feature type="strand" evidence="4">
    <location>
        <begin position="852"/>
        <end position="855"/>
    </location>
</feature>
<proteinExistence type="evidence at protein level"/>
<accession>P48825</accession>